<protein>
    <recommendedName>
        <fullName>Chloroplastic group IIA intron splicing facilitator CRS1, chloroplastic</fullName>
    </recommendedName>
    <alternativeName>
        <fullName>Chloroplastic RNA splicing factor 1</fullName>
    </alternativeName>
    <alternativeName>
        <fullName>Protein CHLOROPLAST RNA SPLICING 1</fullName>
    </alternativeName>
</protein>
<dbReference type="EMBL" id="AL391148">
    <property type="protein sequence ID" value="CAC01859.1"/>
    <property type="status" value="ALT_SEQ"/>
    <property type="molecule type" value="Genomic_DNA"/>
</dbReference>
<dbReference type="EMBL" id="CP002688">
    <property type="protein sequence ID" value="AED92258.1"/>
    <property type="molecule type" value="Genomic_DNA"/>
</dbReference>
<dbReference type="PIR" id="T51488">
    <property type="entry name" value="T51488"/>
</dbReference>
<dbReference type="SMR" id="Q9LF10"/>
<dbReference type="FunCoup" id="Q9LF10">
    <property type="interactions" value="676"/>
</dbReference>
<dbReference type="STRING" id="3702.Q9LF10"/>
<dbReference type="PaxDb" id="3702-AT5G16180.1"/>
<dbReference type="ProteomicsDB" id="222732"/>
<dbReference type="EnsemblPlants" id="AT5G16180.1">
    <property type="protein sequence ID" value="AT5G16180.1"/>
    <property type="gene ID" value="AT5G16180"/>
</dbReference>
<dbReference type="GeneID" id="831476"/>
<dbReference type="Gramene" id="AT5G16180.1">
    <property type="protein sequence ID" value="AT5G16180.1"/>
    <property type="gene ID" value="AT5G16180"/>
</dbReference>
<dbReference type="KEGG" id="ath:AT5G16180"/>
<dbReference type="Araport" id="AT5G16180"/>
<dbReference type="TAIR" id="AT5G16180">
    <property type="gene designation" value="CRS1"/>
</dbReference>
<dbReference type="eggNOG" id="KOG1990">
    <property type="taxonomic scope" value="Eukaryota"/>
</dbReference>
<dbReference type="HOGENOM" id="CLU_006310_2_0_1"/>
<dbReference type="InParanoid" id="Q9LF10"/>
<dbReference type="OMA" id="KFYIILY"/>
<dbReference type="PRO" id="PR:Q9LF10"/>
<dbReference type="Proteomes" id="UP000006548">
    <property type="component" value="Chromosome 5"/>
</dbReference>
<dbReference type="ExpressionAtlas" id="Q9LF10">
    <property type="expression patterns" value="baseline and differential"/>
</dbReference>
<dbReference type="GO" id="GO:0009570">
    <property type="term" value="C:chloroplast stroma"/>
    <property type="evidence" value="ECO:0007669"/>
    <property type="project" value="UniProtKB-SubCell"/>
</dbReference>
<dbReference type="GO" id="GO:1990904">
    <property type="term" value="C:ribonucleoprotein complex"/>
    <property type="evidence" value="ECO:0007669"/>
    <property type="project" value="UniProtKB-KW"/>
</dbReference>
<dbReference type="GO" id="GO:0003729">
    <property type="term" value="F:mRNA binding"/>
    <property type="evidence" value="ECO:0007669"/>
    <property type="project" value="InterPro"/>
</dbReference>
<dbReference type="GO" id="GO:0000373">
    <property type="term" value="P:Group II intron splicing"/>
    <property type="evidence" value="ECO:0000314"/>
    <property type="project" value="TAIR"/>
</dbReference>
<dbReference type="GO" id="GO:0006397">
    <property type="term" value="P:mRNA processing"/>
    <property type="evidence" value="ECO:0007669"/>
    <property type="project" value="UniProtKB-KW"/>
</dbReference>
<dbReference type="GO" id="GO:0006417">
    <property type="term" value="P:regulation of translation"/>
    <property type="evidence" value="ECO:0007669"/>
    <property type="project" value="UniProtKB-KW"/>
</dbReference>
<dbReference type="FunFam" id="3.30.110.60:FF:000002">
    <property type="entry name" value="CRS2-associated factor 1, chloroplastic"/>
    <property type="match status" value="1"/>
</dbReference>
<dbReference type="Gene3D" id="3.30.110.60">
    <property type="entry name" value="YhbY-like"/>
    <property type="match status" value="3"/>
</dbReference>
<dbReference type="InterPro" id="IPR045278">
    <property type="entry name" value="CRS1/CFM2/CFM3"/>
</dbReference>
<dbReference type="InterPro" id="IPR001890">
    <property type="entry name" value="RNA-binding_CRM"/>
</dbReference>
<dbReference type="InterPro" id="IPR035920">
    <property type="entry name" value="YhbY-like_sf"/>
</dbReference>
<dbReference type="PANTHER" id="PTHR31846:SF10">
    <property type="entry name" value="CHLOROPLASTIC GROUP IIA INTRON SPLICING FACILITATOR CRS1, CHLOROPLASTIC"/>
    <property type="match status" value="1"/>
</dbReference>
<dbReference type="PANTHER" id="PTHR31846">
    <property type="entry name" value="CRS1 / YHBY (CRM) DOMAIN-CONTAINING PROTEIN"/>
    <property type="match status" value="1"/>
</dbReference>
<dbReference type="Pfam" id="PF01985">
    <property type="entry name" value="CRS1_YhbY"/>
    <property type="match status" value="3"/>
</dbReference>
<dbReference type="SMART" id="SM01103">
    <property type="entry name" value="CRS1_YhbY"/>
    <property type="match status" value="3"/>
</dbReference>
<dbReference type="SUPFAM" id="SSF75471">
    <property type="entry name" value="YhbY-like"/>
    <property type="match status" value="3"/>
</dbReference>
<dbReference type="PROSITE" id="PS51295">
    <property type="entry name" value="CRM"/>
    <property type="match status" value="3"/>
</dbReference>
<organism>
    <name type="scientific">Arabidopsis thaliana</name>
    <name type="common">Mouse-ear cress</name>
    <dbReference type="NCBI Taxonomy" id="3702"/>
    <lineage>
        <taxon>Eukaryota</taxon>
        <taxon>Viridiplantae</taxon>
        <taxon>Streptophyta</taxon>
        <taxon>Embryophyta</taxon>
        <taxon>Tracheophyta</taxon>
        <taxon>Spermatophyta</taxon>
        <taxon>Magnoliopsida</taxon>
        <taxon>eudicotyledons</taxon>
        <taxon>Gunneridae</taxon>
        <taxon>Pentapetalae</taxon>
        <taxon>rosids</taxon>
        <taxon>malvids</taxon>
        <taxon>Brassicales</taxon>
        <taxon>Brassicaceae</taxon>
        <taxon>Camelineae</taxon>
        <taxon>Arabidopsis</taxon>
    </lineage>
</organism>
<gene>
    <name type="ordered locus">At5g16180</name>
    <name type="ORF">T21H19.100</name>
</gene>
<proteinExistence type="inferred from homology"/>
<reference key="1">
    <citation type="journal article" date="2000" name="Nature">
        <title>Sequence and analysis of chromosome 5 of the plant Arabidopsis thaliana.</title>
        <authorList>
            <person name="Tabata S."/>
            <person name="Kaneko T."/>
            <person name="Nakamura Y."/>
            <person name="Kotani H."/>
            <person name="Kato T."/>
            <person name="Asamizu E."/>
            <person name="Miyajima N."/>
            <person name="Sasamoto S."/>
            <person name="Kimura T."/>
            <person name="Hosouchi T."/>
            <person name="Kawashima K."/>
            <person name="Kohara M."/>
            <person name="Matsumoto M."/>
            <person name="Matsuno A."/>
            <person name="Muraki A."/>
            <person name="Nakayama S."/>
            <person name="Nakazaki N."/>
            <person name="Naruo K."/>
            <person name="Okumura S."/>
            <person name="Shinpo S."/>
            <person name="Takeuchi C."/>
            <person name="Wada T."/>
            <person name="Watanabe A."/>
            <person name="Yamada M."/>
            <person name="Yasuda M."/>
            <person name="Sato S."/>
            <person name="de la Bastide M."/>
            <person name="Huang E."/>
            <person name="Spiegel L."/>
            <person name="Gnoj L."/>
            <person name="O'Shaughnessy A."/>
            <person name="Preston R."/>
            <person name="Habermann K."/>
            <person name="Murray J."/>
            <person name="Johnson D."/>
            <person name="Rohlfing T."/>
            <person name="Nelson J."/>
            <person name="Stoneking T."/>
            <person name="Pepin K."/>
            <person name="Spieth J."/>
            <person name="Sekhon M."/>
            <person name="Armstrong J."/>
            <person name="Becker M."/>
            <person name="Belter E."/>
            <person name="Cordum H."/>
            <person name="Cordes M."/>
            <person name="Courtney L."/>
            <person name="Courtney W."/>
            <person name="Dante M."/>
            <person name="Du H."/>
            <person name="Edwards J."/>
            <person name="Fryman J."/>
            <person name="Haakensen B."/>
            <person name="Lamar E."/>
            <person name="Latreille P."/>
            <person name="Leonard S."/>
            <person name="Meyer R."/>
            <person name="Mulvaney E."/>
            <person name="Ozersky P."/>
            <person name="Riley A."/>
            <person name="Strowmatt C."/>
            <person name="Wagner-McPherson C."/>
            <person name="Wollam A."/>
            <person name="Yoakum M."/>
            <person name="Bell M."/>
            <person name="Dedhia N."/>
            <person name="Parnell L."/>
            <person name="Shah R."/>
            <person name="Rodriguez M."/>
            <person name="Hoon See L."/>
            <person name="Vil D."/>
            <person name="Baker J."/>
            <person name="Kirchoff K."/>
            <person name="Toth K."/>
            <person name="King L."/>
            <person name="Bahret A."/>
            <person name="Miller B."/>
            <person name="Marra M.A."/>
            <person name="Martienssen R."/>
            <person name="McCombie W.R."/>
            <person name="Wilson R.K."/>
            <person name="Murphy G."/>
            <person name="Bancroft I."/>
            <person name="Volckaert G."/>
            <person name="Wambutt R."/>
            <person name="Duesterhoeft A."/>
            <person name="Stiekema W."/>
            <person name="Pohl T."/>
            <person name="Entian K.-D."/>
            <person name="Terryn N."/>
            <person name="Hartley N."/>
            <person name="Bent E."/>
            <person name="Johnson S."/>
            <person name="Langham S.-A."/>
            <person name="McCullagh B."/>
            <person name="Robben J."/>
            <person name="Grymonprez B."/>
            <person name="Zimmermann W."/>
            <person name="Ramsperger U."/>
            <person name="Wedler H."/>
            <person name="Balke K."/>
            <person name="Wedler E."/>
            <person name="Peters S."/>
            <person name="van Staveren M."/>
            <person name="Dirkse W."/>
            <person name="Mooijman P."/>
            <person name="Klein Lankhorst R."/>
            <person name="Weitzenegger T."/>
            <person name="Bothe G."/>
            <person name="Rose M."/>
            <person name="Hauf J."/>
            <person name="Berneiser S."/>
            <person name="Hempel S."/>
            <person name="Feldpausch M."/>
            <person name="Lamberth S."/>
            <person name="Villarroel R."/>
            <person name="Gielen J."/>
            <person name="Ardiles W."/>
            <person name="Bents O."/>
            <person name="Lemcke K."/>
            <person name="Kolesov G."/>
            <person name="Mayer K.F.X."/>
            <person name="Rudd S."/>
            <person name="Schoof H."/>
            <person name="Schueller C."/>
            <person name="Zaccaria P."/>
            <person name="Mewes H.-W."/>
            <person name="Bevan M."/>
            <person name="Fransz P.F."/>
        </authorList>
    </citation>
    <scope>NUCLEOTIDE SEQUENCE [LARGE SCALE GENOMIC DNA]</scope>
    <source>
        <strain>cv. Columbia</strain>
    </source>
</reference>
<reference key="2">
    <citation type="journal article" date="2017" name="Plant J.">
        <title>Araport11: a complete reannotation of the Arabidopsis thaliana reference genome.</title>
        <authorList>
            <person name="Cheng C.Y."/>
            <person name="Krishnakumar V."/>
            <person name="Chan A.P."/>
            <person name="Thibaud-Nissen F."/>
            <person name="Schobel S."/>
            <person name="Town C.D."/>
        </authorList>
    </citation>
    <scope>GENOME REANNOTATION</scope>
    <source>
        <strain>cv. Columbia</strain>
    </source>
</reference>
<reference key="3">
    <citation type="journal article" date="2006" name="Plant Physiol.">
        <title>Arabidopsis orthologs of maize chloroplast splicing factors promote splicing of orthologous and species-specific group II introns.</title>
        <authorList>
            <person name="Asakura Y."/>
            <person name="Barkan A."/>
        </authorList>
    </citation>
    <scope>FUNCTION</scope>
    <scope>DISRUPTION PHENOTYPE</scope>
</reference>
<accession>Q9LF10</accession>
<accession>F4KCP9</accession>
<feature type="transit peptide" description="Chloroplast" evidence="2">
    <location>
        <begin position="1"/>
        <end position="77"/>
    </location>
</feature>
<feature type="chain" id="PRO_0000283624" description="Chloroplastic group IIA intron splicing facilitator CRS1, chloroplastic">
    <location>
        <begin position="78"/>
        <end position="720"/>
    </location>
</feature>
<feature type="domain" description="CRM 1" evidence="3">
    <location>
        <begin position="205"/>
        <end position="301"/>
    </location>
</feature>
<feature type="domain" description="CRM 2" evidence="3">
    <location>
        <begin position="359"/>
        <end position="456"/>
    </location>
</feature>
<feature type="domain" description="CRM 3" evidence="3">
    <location>
        <begin position="570"/>
        <end position="670"/>
    </location>
</feature>
<feature type="coiled-coil region" evidence="2">
    <location>
        <begin position="131"/>
        <end position="159"/>
    </location>
</feature>
<feature type="coiled-coil region" evidence="2">
    <location>
        <begin position="447"/>
        <end position="477"/>
    </location>
</feature>
<feature type="coiled-coil region" evidence="2">
    <location>
        <begin position="517"/>
        <end position="553"/>
    </location>
</feature>
<sequence>MRNGINILSYPRFLSFCEVFVLLLCNFSDNPKLQTFTQMLNSLFLSARAFPSLITNSSSRRAKSSQFDQFRENRGVSDAAIKVPTAPWMKGPLLLRPDEILDTKKRNKPRKVEEKTFKALNRRESGVRGKKAMKKIVRNVEKLDEDSDSEETQMDDLSEFEYLGRIEEKVESKDRFGGKMPWEREEERFILRRMKKESVPTTAELILDEGLLNRLRREASKMRKWVNVRKAGVTELVVNKIKSMWKLNELAMVRFDVPLCRNMERAQEIIEMKTGGLVVLSKKEFLVVYRGGPSYSSEGQDEISSSLYEREADRLLDGLGPRYMDWWMRRPFPVDADLLPEVVNGYMTPSRRCPPNTRAKLTDEELTYLRNIAQPLPFHFVLGRNYGLQGLASAIVKLWEKCIIAKIAIKWGALNTNNEEMADELRYLTGGVLILRNKYLIVLYRGKDFLSDEVADLVEDRERLLSRYQHFEETKRESDIELLEVVTNGKQLKETNKSGTLLEFQELQRKFGEMDPRNLETEAEKARLEKELKSQEHKLSILKSKIEKSNMELFKLNSLWKPSEGDDDIEILTNEERECLRRIGLKMNSSLVLGRRGVFFGVMEGLHQHWKHREVAKVITMQKLFSRVVYTAKALETESNGVLISIEKLKEGHAILIYRGKNYKRPSSKLMAQNLLTKRKALQRSVVMQRLGSLKFFAYQRERAIEDLKVSLVNLQDSAF</sequence>
<keyword id="KW-0150">Chloroplast</keyword>
<keyword id="KW-0175">Coiled coil</keyword>
<keyword id="KW-0507">mRNA processing</keyword>
<keyword id="KW-0508">mRNA splicing</keyword>
<keyword id="KW-0934">Plastid</keyword>
<keyword id="KW-1185">Reference proteome</keyword>
<keyword id="KW-0677">Repeat</keyword>
<keyword id="KW-0687">Ribonucleoprotein</keyword>
<keyword id="KW-0694">RNA-binding</keyword>
<keyword id="KW-0809">Transit peptide</keyword>
<keyword id="KW-0810">Translation regulation</keyword>
<evidence type="ECO:0000250" key="1"/>
<evidence type="ECO:0000255" key="2"/>
<evidence type="ECO:0000255" key="3">
    <source>
        <dbReference type="PROSITE-ProRule" id="PRU00626"/>
    </source>
</evidence>
<evidence type="ECO:0000269" key="4">
    <source>
    </source>
</evidence>
<evidence type="ECO:0000305" key="5"/>
<name>CRS1_ARATH</name>
<comment type="function">
    <text evidence="4">Required for the splicing of group IIA introns in chloroplasts, by regulating the intron folding. Forms splicing particles with RNA. May also be involved in chloroplast protein translation.</text>
</comment>
<comment type="subunit">
    <text evidence="1">Homodimer. Interacts with RNA. Part of large ribonucleo-protein complexes that include group IIA introns and CRS1 (By similarity).</text>
</comment>
<comment type="subcellular location">
    <subcellularLocation>
        <location evidence="5">Plastid</location>
        <location evidence="5">Chloroplast stroma</location>
    </subcellularLocation>
</comment>
<comment type="disruption phenotype">
    <text evidence="4">Plants are albinos.</text>
</comment>
<comment type="sequence caution" evidence="5">
    <conflict type="erroneous gene model prediction">
        <sequence resource="EMBL-CDS" id="CAC01859"/>
    </conflict>
</comment>